<feature type="initiator methionine" description="Removed" evidence="2">
    <location>
        <position position="1"/>
    </location>
</feature>
<feature type="chain" id="PRO_0000192977" description="Leghemoglobin">
    <location>
        <begin position="2"/>
        <end position="149"/>
    </location>
</feature>
<feature type="domain" description="Globin" evidence="7">
    <location>
        <begin position="3"/>
        <end position="147"/>
    </location>
</feature>
<feature type="binding site" evidence="4">
    <location>
        <position position="46"/>
    </location>
    <ligand>
        <name>heme b</name>
        <dbReference type="ChEBI" id="CHEBI:60344"/>
    </ligand>
</feature>
<feature type="binding site" evidence="4">
    <location>
        <position position="62"/>
    </location>
    <ligand>
        <name>O2</name>
        <dbReference type="ChEBI" id="CHEBI:15379"/>
    </ligand>
</feature>
<feature type="binding site" evidence="4">
    <location>
        <position position="65"/>
    </location>
    <ligand>
        <name>heme b</name>
        <dbReference type="ChEBI" id="CHEBI:60344"/>
    </ligand>
</feature>
<feature type="binding site" description="proximal binding residue" evidence="7">
    <location>
        <position position="94"/>
    </location>
    <ligand>
        <name>heme b</name>
        <dbReference type="ChEBI" id="CHEBI:60344"/>
    </ligand>
    <ligandPart>
        <name>Fe</name>
        <dbReference type="ChEBI" id="CHEBI:18248"/>
    </ligandPart>
</feature>
<feature type="binding site" evidence="4">
    <location>
        <position position="97"/>
    </location>
    <ligand>
        <name>heme b</name>
        <dbReference type="ChEBI" id="CHEBI:60344"/>
    </ligand>
</feature>
<feature type="modified residue" description="Nitrated tyrosine" evidence="1">
    <location>
        <position position="31"/>
    </location>
</feature>
<feature type="modified residue" description="Phosphoserine" evidence="5">
    <location>
        <position position="46"/>
    </location>
</feature>
<feature type="modified residue" description="Nitrated tyrosine" evidence="1">
    <location>
        <position position="135"/>
    </location>
</feature>
<proteinExistence type="evidence at transcript level"/>
<keyword id="KW-0963">Cytoplasm</keyword>
<keyword id="KW-0349">Heme</keyword>
<keyword id="KW-0408">Iron</keyword>
<keyword id="KW-0479">Metal-binding</keyword>
<keyword id="KW-0944">Nitration</keyword>
<keyword id="KW-0535">Nitrogen fixation</keyword>
<keyword id="KW-0536">Nodulation</keyword>
<keyword id="KW-0539">Nucleus</keyword>
<keyword id="KW-0561">Oxygen transport</keyword>
<keyword id="KW-0597">Phosphoprotein</keyword>
<keyword id="KW-0813">Transport</keyword>
<dbReference type="EMBL" id="U09671">
    <property type="protein sequence ID" value="AAA18503.1"/>
    <property type="molecule type" value="mRNA"/>
</dbReference>
<dbReference type="SMR" id="P42511"/>
<dbReference type="GO" id="GO:0005829">
    <property type="term" value="C:cytosol"/>
    <property type="evidence" value="ECO:0007669"/>
    <property type="project" value="UniProtKB-SubCell"/>
</dbReference>
<dbReference type="GO" id="GO:0005634">
    <property type="term" value="C:nucleus"/>
    <property type="evidence" value="ECO:0007669"/>
    <property type="project" value="UniProtKB-SubCell"/>
</dbReference>
<dbReference type="GO" id="GO:0020037">
    <property type="term" value="F:heme binding"/>
    <property type="evidence" value="ECO:0007669"/>
    <property type="project" value="InterPro"/>
</dbReference>
<dbReference type="GO" id="GO:0046872">
    <property type="term" value="F:metal ion binding"/>
    <property type="evidence" value="ECO:0007669"/>
    <property type="project" value="UniProtKB-KW"/>
</dbReference>
<dbReference type="GO" id="GO:0019825">
    <property type="term" value="F:oxygen binding"/>
    <property type="evidence" value="ECO:0007669"/>
    <property type="project" value="InterPro"/>
</dbReference>
<dbReference type="GO" id="GO:0005344">
    <property type="term" value="F:oxygen carrier activity"/>
    <property type="evidence" value="ECO:0007669"/>
    <property type="project" value="UniProtKB-KW"/>
</dbReference>
<dbReference type="GO" id="GO:0009877">
    <property type="term" value="P:nodulation"/>
    <property type="evidence" value="ECO:0007669"/>
    <property type="project" value="UniProtKB-KW"/>
</dbReference>
<dbReference type="CDD" id="cd08923">
    <property type="entry name" value="class1-2_nsHbs_Lbs"/>
    <property type="match status" value="1"/>
</dbReference>
<dbReference type="Gene3D" id="1.10.490.10">
    <property type="entry name" value="Globins"/>
    <property type="match status" value="1"/>
</dbReference>
<dbReference type="InterPro" id="IPR000971">
    <property type="entry name" value="Globin"/>
</dbReference>
<dbReference type="InterPro" id="IPR009050">
    <property type="entry name" value="Globin-like_sf"/>
</dbReference>
<dbReference type="InterPro" id="IPR012292">
    <property type="entry name" value="Globin/Proto"/>
</dbReference>
<dbReference type="InterPro" id="IPR001032">
    <property type="entry name" value="Leghaemoglobin-like"/>
</dbReference>
<dbReference type="InterPro" id="IPR019824">
    <property type="entry name" value="Leghaemoglobin_Fe_BS"/>
</dbReference>
<dbReference type="PANTHER" id="PTHR22924">
    <property type="entry name" value="LEGHEMOGLOBIN-RELATED"/>
    <property type="match status" value="1"/>
</dbReference>
<dbReference type="PANTHER" id="PTHR22924:SF92">
    <property type="entry name" value="NON-SYMBIOTIC HEMOGLOBIN 2"/>
    <property type="match status" value="1"/>
</dbReference>
<dbReference type="Pfam" id="PF00042">
    <property type="entry name" value="Globin"/>
    <property type="match status" value="1"/>
</dbReference>
<dbReference type="PRINTS" id="PR00188">
    <property type="entry name" value="PLANTGLOBIN"/>
</dbReference>
<dbReference type="SUPFAM" id="SSF46458">
    <property type="entry name" value="Globin-like"/>
    <property type="match status" value="1"/>
</dbReference>
<dbReference type="PROSITE" id="PS01033">
    <property type="entry name" value="GLOBIN"/>
    <property type="match status" value="1"/>
</dbReference>
<dbReference type="PROSITE" id="PS00208">
    <property type="entry name" value="PLANT_GLOBIN"/>
    <property type="match status" value="1"/>
</dbReference>
<comment type="function">
    <text evidence="3 6">Leghemoglobin that reversibly binds oxygen O(2) through a pentacoordinated heme iron (By similarity). In root nodules, facilitates the diffusion of oxygen to the bacteroids while preventing the bacterial nitrogenase from being inactivated by buffering dioxygen, nitric oxide and carbon monoxide, and promoting the formation of reactive oxygen species (ROS, e.g. H(2)O(2)) (By similarity). This role is essential for symbiotic nitrogen fixation (SNF) (By similarity).</text>
</comment>
<comment type="subunit">
    <text evidence="4">Monomer.</text>
</comment>
<comment type="subcellular location">
    <subcellularLocation>
        <location evidence="4">Cytoplasm</location>
        <location evidence="4">Cytosol</location>
    </subcellularLocation>
    <subcellularLocation>
        <location evidence="4">Nucleus</location>
    </subcellularLocation>
</comment>
<comment type="tissue specificity">
    <text evidence="8">Root nodules.</text>
</comment>
<comment type="PTM">
    <text evidence="1">Nitrated in effective nodules and particularly in hypoxic conditions; this mechanism may play a protective role in the symbiosis by buffering toxic peroxynitrite NO(2)(-). Nitration level decrease during nodule senescence.</text>
</comment>
<comment type="PTM">
    <text evidence="5">Phosphorylation at Ser-46 disrupts the molecular environment of its porphyrin ring oxygen binding pocket, thus leading to a reduced oxygen consumption and to the delivery of oxygen O(2) to symbiosomes.</text>
</comment>
<comment type="similarity">
    <text evidence="9">Belongs to the plant globin family.</text>
</comment>
<name>LGB_CANLI</name>
<accession>P42511</accession>
<evidence type="ECO:0000250" key="1">
    <source>
        <dbReference type="UniProtKB" id="P02234"/>
    </source>
</evidence>
<evidence type="ECO:0000250" key="2">
    <source>
        <dbReference type="UniProtKB" id="P02236"/>
    </source>
</evidence>
<evidence type="ECO:0000250" key="3">
    <source>
        <dbReference type="UniProtKB" id="P02237"/>
    </source>
</evidence>
<evidence type="ECO:0000250" key="4">
    <source>
        <dbReference type="UniProtKB" id="P02240"/>
    </source>
</evidence>
<evidence type="ECO:0000250" key="5">
    <source>
        <dbReference type="UniProtKB" id="Q3C1F7"/>
    </source>
</evidence>
<evidence type="ECO:0000250" key="6">
    <source>
        <dbReference type="UniProtKB" id="Q43296"/>
    </source>
</evidence>
<evidence type="ECO:0000255" key="7">
    <source>
        <dbReference type="PROSITE-ProRule" id="PRU00238"/>
    </source>
</evidence>
<evidence type="ECO:0000269" key="8">
    <source ref="1"/>
</evidence>
<evidence type="ECO:0000305" key="9"/>
<reference key="1">
    <citation type="submission" date="1994-05" db="EMBL/GenBank/DDBJ databases">
        <title>Nucleotide sequence of leghemoglobin cDNA from Canavalia lineata.</title>
        <authorList>
            <person name="Kim I."/>
            <person name="Choe S."/>
            <person name="An C.S."/>
        </authorList>
    </citation>
    <scope>NUCLEOTIDE SEQUENCE [MRNA]</scope>
    <scope>TISSUE SPECIFICITY</scope>
    <source>
        <tissue>Root nodule</tissue>
    </source>
</reference>
<protein>
    <recommendedName>
        <fullName>Leghemoglobin</fullName>
    </recommendedName>
</protein>
<sequence length="149" mass="16296">MGAFSEKQESLVKSSWEAFKQNVPHHSAVFYTLILEKAPAAQNMFSFLSNGVDPNNPKLKAHAEKVFKMTVDSAVQLRAKGEVVLADPTLGSVHVQKGVLDPHFLVVKEALLKTFKEAVGDKWNDELGNAWEVAYDELAAAIKKAMGSA</sequence>
<organism>
    <name type="scientific">Canavalia lineata</name>
    <name type="common">Beach bean</name>
    <name type="synonym">Dolichos lineatus</name>
    <dbReference type="NCBI Taxonomy" id="28957"/>
    <lineage>
        <taxon>Eukaryota</taxon>
        <taxon>Viridiplantae</taxon>
        <taxon>Streptophyta</taxon>
        <taxon>Embryophyta</taxon>
        <taxon>Tracheophyta</taxon>
        <taxon>Spermatophyta</taxon>
        <taxon>Magnoliopsida</taxon>
        <taxon>eudicotyledons</taxon>
        <taxon>Gunneridae</taxon>
        <taxon>Pentapetalae</taxon>
        <taxon>rosids</taxon>
        <taxon>fabids</taxon>
        <taxon>Fabales</taxon>
        <taxon>Fabaceae</taxon>
        <taxon>Papilionoideae</taxon>
        <taxon>50 kb inversion clade</taxon>
        <taxon>NPAAA clade</taxon>
        <taxon>indigoferoid/millettioid clade</taxon>
        <taxon>Phaseoleae</taxon>
        <taxon>Canavalia</taxon>
    </lineage>
</organism>